<feature type="chain" id="PRO_0000050236" description="Putative regulatory protein tsl2331">
    <location>
        <begin position="1"/>
        <end position="77"/>
    </location>
</feature>
<keyword id="KW-1185">Reference proteome</keyword>
<organism>
    <name type="scientific">Thermosynechococcus vestitus (strain NIES-2133 / IAM M-273 / BP-1)</name>
    <dbReference type="NCBI Taxonomy" id="197221"/>
    <lineage>
        <taxon>Bacteria</taxon>
        <taxon>Bacillati</taxon>
        <taxon>Cyanobacteriota</taxon>
        <taxon>Cyanophyceae</taxon>
        <taxon>Acaryochloridales</taxon>
        <taxon>Thermosynechococcaceae</taxon>
        <taxon>Thermosynechococcus</taxon>
    </lineage>
</organism>
<evidence type="ECO:0000255" key="1">
    <source>
        <dbReference type="HAMAP-Rule" id="MF_01503"/>
    </source>
</evidence>
<sequence>MLNIGFGNYISPQRLLAIVSPDSAPIKRLILEAREHHHLIDATHGRRTRAVLVLDGEIIVLSALHPETLVARLSPPP</sequence>
<comment type="similarity">
    <text evidence="1">Belongs to the RemA family.</text>
</comment>
<reference key="1">
    <citation type="journal article" date="2002" name="DNA Res.">
        <title>Complete genome structure of the thermophilic cyanobacterium Thermosynechococcus elongatus BP-1.</title>
        <authorList>
            <person name="Nakamura Y."/>
            <person name="Kaneko T."/>
            <person name="Sato S."/>
            <person name="Ikeuchi M."/>
            <person name="Katoh H."/>
            <person name="Sasamoto S."/>
            <person name="Watanabe A."/>
            <person name="Iriguchi M."/>
            <person name="Kawashima K."/>
            <person name="Kimura T."/>
            <person name="Kishida Y."/>
            <person name="Kiyokawa C."/>
            <person name="Kohara M."/>
            <person name="Matsumoto M."/>
            <person name="Matsuno A."/>
            <person name="Nakazaki N."/>
            <person name="Shimpo S."/>
            <person name="Sugimoto M."/>
            <person name="Takeuchi C."/>
            <person name="Yamada M."/>
            <person name="Tabata S."/>
        </authorList>
    </citation>
    <scope>NUCLEOTIDE SEQUENCE [LARGE SCALE GENOMIC DNA]</scope>
    <source>
        <strain>NIES-2133 / IAM M-273 / BP-1</strain>
    </source>
</reference>
<proteinExistence type="inferred from homology"/>
<name>Y2331_THEVB</name>
<protein>
    <recommendedName>
        <fullName evidence="1">Putative regulatory protein tsl2331</fullName>
    </recommendedName>
</protein>
<gene>
    <name type="ordered locus">tsl2331</name>
</gene>
<accession>Q8DGI6</accession>
<dbReference type="EMBL" id="BA000039">
    <property type="protein sequence ID" value="BAC09883.1"/>
    <property type="molecule type" value="Genomic_DNA"/>
</dbReference>
<dbReference type="RefSeq" id="NP_683121.1">
    <property type="nucleotide sequence ID" value="NC_004113.1"/>
</dbReference>
<dbReference type="RefSeq" id="WP_011058164.1">
    <property type="nucleotide sequence ID" value="NC_004113.1"/>
</dbReference>
<dbReference type="SMR" id="Q8DGI6"/>
<dbReference type="STRING" id="197221.gene:10748950"/>
<dbReference type="EnsemblBacteria" id="BAC09883">
    <property type="protein sequence ID" value="BAC09883"/>
    <property type="gene ID" value="BAC09883"/>
</dbReference>
<dbReference type="KEGG" id="tel:tsl2331"/>
<dbReference type="PATRIC" id="fig|197221.4.peg.2443"/>
<dbReference type="eggNOG" id="COG2052">
    <property type="taxonomic scope" value="Bacteria"/>
</dbReference>
<dbReference type="Proteomes" id="UP000000440">
    <property type="component" value="Chromosome"/>
</dbReference>
<dbReference type="HAMAP" id="MF_01503">
    <property type="entry name" value="RemA"/>
    <property type="match status" value="1"/>
</dbReference>
<dbReference type="InterPro" id="IPR007169">
    <property type="entry name" value="RemA-like"/>
</dbReference>
<dbReference type="NCBIfam" id="NF003315">
    <property type="entry name" value="PRK04323.1"/>
    <property type="match status" value="1"/>
</dbReference>
<dbReference type="PANTHER" id="PTHR38449:SF1">
    <property type="entry name" value="REGULATORY PROTEIN SSL2874-RELATED"/>
    <property type="match status" value="1"/>
</dbReference>
<dbReference type="PANTHER" id="PTHR38449">
    <property type="entry name" value="REGULATORY PROTEIN TM_1690-RELATED"/>
    <property type="match status" value="1"/>
</dbReference>
<dbReference type="Pfam" id="PF04025">
    <property type="entry name" value="RemA-like"/>
    <property type="match status" value="1"/>
</dbReference>